<name>NUOH_BRASB</name>
<protein>
    <recommendedName>
        <fullName evidence="1">NADH-quinone oxidoreductase subunit H</fullName>
        <ecNumber evidence="1">7.1.1.-</ecNumber>
    </recommendedName>
    <alternativeName>
        <fullName evidence="1">NADH dehydrogenase I subunit H</fullName>
    </alternativeName>
    <alternativeName>
        <fullName evidence="1">NDH-1 subunit H</fullName>
    </alternativeName>
</protein>
<keyword id="KW-0997">Cell inner membrane</keyword>
<keyword id="KW-1003">Cell membrane</keyword>
<keyword id="KW-0472">Membrane</keyword>
<keyword id="KW-0520">NAD</keyword>
<keyword id="KW-0874">Quinone</keyword>
<keyword id="KW-1185">Reference proteome</keyword>
<keyword id="KW-1278">Translocase</keyword>
<keyword id="KW-0812">Transmembrane</keyword>
<keyword id="KW-1133">Transmembrane helix</keyword>
<keyword id="KW-0830">Ubiquinone</keyword>
<gene>
    <name evidence="1" type="primary">nuoH</name>
    <name type="ordered locus">BBta_4554</name>
</gene>
<feature type="chain" id="PRO_0000298796" description="NADH-quinone oxidoreductase subunit H">
    <location>
        <begin position="1"/>
        <end position="356"/>
    </location>
</feature>
<feature type="transmembrane region" description="Helical" evidence="1">
    <location>
        <begin position="18"/>
        <end position="38"/>
    </location>
</feature>
<feature type="transmembrane region" description="Helical" evidence="1">
    <location>
        <begin position="87"/>
        <end position="107"/>
    </location>
</feature>
<feature type="transmembrane region" description="Helical" evidence="1">
    <location>
        <begin position="120"/>
        <end position="140"/>
    </location>
</feature>
<feature type="transmembrane region" description="Helical" evidence="1">
    <location>
        <begin position="166"/>
        <end position="186"/>
    </location>
</feature>
<feature type="transmembrane region" description="Helical" evidence="1">
    <location>
        <begin position="205"/>
        <end position="225"/>
    </location>
</feature>
<feature type="transmembrane region" description="Helical" evidence="1">
    <location>
        <begin position="265"/>
        <end position="285"/>
    </location>
</feature>
<feature type="transmembrane region" description="Helical" evidence="1">
    <location>
        <begin position="292"/>
        <end position="312"/>
    </location>
</feature>
<feature type="transmembrane region" description="Helical" evidence="1">
    <location>
        <begin position="333"/>
        <end position="353"/>
    </location>
</feature>
<reference key="1">
    <citation type="journal article" date="2007" name="Science">
        <title>Legumes symbioses: absence of nod genes in photosynthetic bradyrhizobia.</title>
        <authorList>
            <person name="Giraud E."/>
            <person name="Moulin L."/>
            <person name="Vallenet D."/>
            <person name="Barbe V."/>
            <person name="Cytryn E."/>
            <person name="Avarre J.-C."/>
            <person name="Jaubert M."/>
            <person name="Simon D."/>
            <person name="Cartieaux F."/>
            <person name="Prin Y."/>
            <person name="Bena G."/>
            <person name="Hannibal L."/>
            <person name="Fardoux J."/>
            <person name="Kojadinovic M."/>
            <person name="Vuillet L."/>
            <person name="Lajus A."/>
            <person name="Cruveiller S."/>
            <person name="Rouy Z."/>
            <person name="Mangenot S."/>
            <person name="Segurens B."/>
            <person name="Dossat C."/>
            <person name="Franck W.L."/>
            <person name="Chang W.-S."/>
            <person name="Saunders E."/>
            <person name="Bruce D."/>
            <person name="Richardson P."/>
            <person name="Normand P."/>
            <person name="Dreyfus B."/>
            <person name="Pignol D."/>
            <person name="Stacey G."/>
            <person name="Emerich D."/>
            <person name="Vermeglio A."/>
            <person name="Medigue C."/>
            <person name="Sadowsky M."/>
        </authorList>
    </citation>
    <scope>NUCLEOTIDE SEQUENCE [LARGE SCALE GENOMIC DNA]</scope>
    <source>
        <strain>BTAi1 / ATCC BAA-1182</strain>
    </source>
</reference>
<dbReference type="EC" id="7.1.1.-" evidence="1"/>
<dbReference type="EMBL" id="CP000494">
    <property type="protein sequence ID" value="ABQ36585.1"/>
    <property type="molecule type" value="Genomic_DNA"/>
</dbReference>
<dbReference type="RefSeq" id="WP_012044580.1">
    <property type="nucleotide sequence ID" value="NC_009485.1"/>
</dbReference>
<dbReference type="SMR" id="A5EK91"/>
<dbReference type="STRING" id="288000.BBta_4554"/>
<dbReference type="KEGG" id="bbt:BBta_4554"/>
<dbReference type="eggNOG" id="COG1005">
    <property type="taxonomic scope" value="Bacteria"/>
</dbReference>
<dbReference type="HOGENOM" id="CLU_015134_0_1_5"/>
<dbReference type="OrthoDB" id="9803734at2"/>
<dbReference type="Proteomes" id="UP000000246">
    <property type="component" value="Chromosome"/>
</dbReference>
<dbReference type="GO" id="GO:0005886">
    <property type="term" value="C:plasma membrane"/>
    <property type="evidence" value="ECO:0007669"/>
    <property type="project" value="UniProtKB-SubCell"/>
</dbReference>
<dbReference type="GO" id="GO:0003954">
    <property type="term" value="F:NADH dehydrogenase activity"/>
    <property type="evidence" value="ECO:0007669"/>
    <property type="project" value="TreeGrafter"/>
</dbReference>
<dbReference type="GO" id="GO:0016655">
    <property type="term" value="F:oxidoreductase activity, acting on NAD(P)H, quinone or similar compound as acceptor"/>
    <property type="evidence" value="ECO:0007669"/>
    <property type="project" value="UniProtKB-UniRule"/>
</dbReference>
<dbReference type="GO" id="GO:0048038">
    <property type="term" value="F:quinone binding"/>
    <property type="evidence" value="ECO:0007669"/>
    <property type="project" value="UniProtKB-KW"/>
</dbReference>
<dbReference type="GO" id="GO:0009060">
    <property type="term" value="P:aerobic respiration"/>
    <property type="evidence" value="ECO:0007669"/>
    <property type="project" value="TreeGrafter"/>
</dbReference>
<dbReference type="HAMAP" id="MF_01350">
    <property type="entry name" value="NDH1_NuoH"/>
    <property type="match status" value="1"/>
</dbReference>
<dbReference type="InterPro" id="IPR001694">
    <property type="entry name" value="NADH_UbQ_OxRdtase_su1/FPO"/>
</dbReference>
<dbReference type="InterPro" id="IPR018086">
    <property type="entry name" value="NADH_UbQ_OxRdtase_su1_CS"/>
</dbReference>
<dbReference type="NCBIfam" id="NF004745">
    <property type="entry name" value="PRK06076.1-6"/>
    <property type="match status" value="1"/>
</dbReference>
<dbReference type="PANTHER" id="PTHR11432">
    <property type="entry name" value="NADH DEHYDROGENASE SUBUNIT 1"/>
    <property type="match status" value="1"/>
</dbReference>
<dbReference type="PANTHER" id="PTHR11432:SF3">
    <property type="entry name" value="NADH-UBIQUINONE OXIDOREDUCTASE CHAIN 1"/>
    <property type="match status" value="1"/>
</dbReference>
<dbReference type="Pfam" id="PF00146">
    <property type="entry name" value="NADHdh"/>
    <property type="match status" value="1"/>
</dbReference>
<dbReference type="PROSITE" id="PS00668">
    <property type="entry name" value="COMPLEX1_ND1_2"/>
    <property type="match status" value="1"/>
</dbReference>
<evidence type="ECO:0000255" key="1">
    <source>
        <dbReference type="HAMAP-Rule" id="MF_01350"/>
    </source>
</evidence>
<sequence length="356" mass="39134">MADFFASSFWTGFLWPLIVMIAQSVLLLVVLLVAIAYILLADRKIWAAVQIRRGPNVVGPWGLFQSFADLLKFVLKEPIIPAGANKGVFLLAPLVSCVLALAAWAVIPTNLGWAIADINVGILFIFAISSLSIYGIIMAGWSSNSKYPFLAALRSAAQMVSYEVSIGFVIITVLLCAGTLNLSAVVEAQHARGLASLIGLPQLTILNWYVWPLFPMFVVFYVSALAETNRPPFDLVEAESELVAGFMVEYGSTPYLLFMLGEYVAITTMCALATILFLGGWLPPIDLPPFNWVPGVIWFALKLFFMFFLIAMAKAIVPRYRYDQLMRLGWKVFLPLSLVMVVIVAGVLHFAGIAPK</sequence>
<comment type="function">
    <text evidence="1">NDH-1 shuttles electrons from NADH, via FMN and iron-sulfur (Fe-S) centers, to quinones in the respiratory chain. The immediate electron acceptor for the enzyme in this species is believed to be ubiquinone. Couples the redox reaction to proton translocation (for every two electrons transferred, four hydrogen ions are translocated across the cytoplasmic membrane), and thus conserves the redox energy in a proton gradient. This subunit may bind ubiquinone.</text>
</comment>
<comment type="catalytic activity">
    <reaction evidence="1">
        <text>a quinone + NADH + 5 H(+)(in) = a quinol + NAD(+) + 4 H(+)(out)</text>
        <dbReference type="Rhea" id="RHEA:57888"/>
        <dbReference type="ChEBI" id="CHEBI:15378"/>
        <dbReference type="ChEBI" id="CHEBI:24646"/>
        <dbReference type="ChEBI" id="CHEBI:57540"/>
        <dbReference type="ChEBI" id="CHEBI:57945"/>
        <dbReference type="ChEBI" id="CHEBI:132124"/>
    </reaction>
</comment>
<comment type="subunit">
    <text evidence="1">NDH-1 is composed of 14 different subunits. Subunits NuoA, H, J, K, L, M, N constitute the membrane sector of the complex.</text>
</comment>
<comment type="subcellular location">
    <subcellularLocation>
        <location evidence="1">Cell inner membrane</location>
        <topology evidence="1">Multi-pass membrane protein</topology>
    </subcellularLocation>
</comment>
<comment type="similarity">
    <text evidence="1">Belongs to the complex I subunit 1 family.</text>
</comment>
<organism>
    <name type="scientific">Bradyrhizobium sp. (strain BTAi1 / ATCC BAA-1182)</name>
    <dbReference type="NCBI Taxonomy" id="288000"/>
    <lineage>
        <taxon>Bacteria</taxon>
        <taxon>Pseudomonadati</taxon>
        <taxon>Pseudomonadota</taxon>
        <taxon>Alphaproteobacteria</taxon>
        <taxon>Hyphomicrobiales</taxon>
        <taxon>Nitrobacteraceae</taxon>
        <taxon>Bradyrhizobium</taxon>
    </lineage>
</organism>
<proteinExistence type="inferred from homology"/>
<accession>A5EK91</accession>